<reference key="1">
    <citation type="journal article" date="2005" name="Science">
        <title>The transcriptional landscape of the mammalian genome.</title>
        <authorList>
            <person name="Carninci P."/>
            <person name="Kasukawa T."/>
            <person name="Katayama S."/>
            <person name="Gough J."/>
            <person name="Frith M.C."/>
            <person name="Maeda N."/>
            <person name="Oyama R."/>
            <person name="Ravasi T."/>
            <person name="Lenhard B."/>
            <person name="Wells C."/>
            <person name="Kodzius R."/>
            <person name="Shimokawa K."/>
            <person name="Bajic V.B."/>
            <person name="Brenner S.E."/>
            <person name="Batalov S."/>
            <person name="Forrest A.R."/>
            <person name="Zavolan M."/>
            <person name="Davis M.J."/>
            <person name="Wilming L.G."/>
            <person name="Aidinis V."/>
            <person name="Allen J.E."/>
            <person name="Ambesi-Impiombato A."/>
            <person name="Apweiler R."/>
            <person name="Aturaliya R.N."/>
            <person name="Bailey T.L."/>
            <person name="Bansal M."/>
            <person name="Baxter L."/>
            <person name="Beisel K.W."/>
            <person name="Bersano T."/>
            <person name="Bono H."/>
            <person name="Chalk A.M."/>
            <person name="Chiu K.P."/>
            <person name="Choudhary V."/>
            <person name="Christoffels A."/>
            <person name="Clutterbuck D.R."/>
            <person name="Crowe M.L."/>
            <person name="Dalla E."/>
            <person name="Dalrymple B.P."/>
            <person name="de Bono B."/>
            <person name="Della Gatta G."/>
            <person name="di Bernardo D."/>
            <person name="Down T."/>
            <person name="Engstrom P."/>
            <person name="Fagiolini M."/>
            <person name="Faulkner G."/>
            <person name="Fletcher C.F."/>
            <person name="Fukushima T."/>
            <person name="Furuno M."/>
            <person name="Futaki S."/>
            <person name="Gariboldi M."/>
            <person name="Georgii-Hemming P."/>
            <person name="Gingeras T.R."/>
            <person name="Gojobori T."/>
            <person name="Green R.E."/>
            <person name="Gustincich S."/>
            <person name="Harbers M."/>
            <person name="Hayashi Y."/>
            <person name="Hensch T.K."/>
            <person name="Hirokawa N."/>
            <person name="Hill D."/>
            <person name="Huminiecki L."/>
            <person name="Iacono M."/>
            <person name="Ikeo K."/>
            <person name="Iwama A."/>
            <person name="Ishikawa T."/>
            <person name="Jakt M."/>
            <person name="Kanapin A."/>
            <person name="Katoh M."/>
            <person name="Kawasawa Y."/>
            <person name="Kelso J."/>
            <person name="Kitamura H."/>
            <person name="Kitano H."/>
            <person name="Kollias G."/>
            <person name="Krishnan S.P."/>
            <person name="Kruger A."/>
            <person name="Kummerfeld S.K."/>
            <person name="Kurochkin I.V."/>
            <person name="Lareau L.F."/>
            <person name="Lazarevic D."/>
            <person name="Lipovich L."/>
            <person name="Liu J."/>
            <person name="Liuni S."/>
            <person name="McWilliam S."/>
            <person name="Madan Babu M."/>
            <person name="Madera M."/>
            <person name="Marchionni L."/>
            <person name="Matsuda H."/>
            <person name="Matsuzawa S."/>
            <person name="Miki H."/>
            <person name="Mignone F."/>
            <person name="Miyake S."/>
            <person name="Morris K."/>
            <person name="Mottagui-Tabar S."/>
            <person name="Mulder N."/>
            <person name="Nakano N."/>
            <person name="Nakauchi H."/>
            <person name="Ng P."/>
            <person name="Nilsson R."/>
            <person name="Nishiguchi S."/>
            <person name="Nishikawa S."/>
            <person name="Nori F."/>
            <person name="Ohara O."/>
            <person name="Okazaki Y."/>
            <person name="Orlando V."/>
            <person name="Pang K.C."/>
            <person name="Pavan W.J."/>
            <person name="Pavesi G."/>
            <person name="Pesole G."/>
            <person name="Petrovsky N."/>
            <person name="Piazza S."/>
            <person name="Reed J."/>
            <person name="Reid J.F."/>
            <person name="Ring B.Z."/>
            <person name="Ringwald M."/>
            <person name="Rost B."/>
            <person name="Ruan Y."/>
            <person name="Salzberg S.L."/>
            <person name="Sandelin A."/>
            <person name="Schneider C."/>
            <person name="Schoenbach C."/>
            <person name="Sekiguchi K."/>
            <person name="Semple C.A."/>
            <person name="Seno S."/>
            <person name="Sessa L."/>
            <person name="Sheng Y."/>
            <person name="Shibata Y."/>
            <person name="Shimada H."/>
            <person name="Shimada K."/>
            <person name="Silva D."/>
            <person name="Sinclair B."/>
            <person name="Sperling S."/>
            <person name="Stupka E."/>
            <person name="Sugiura K."/>
            <person name="Sultana R."/>
            <person name="Takenaka Y."/>
            <person name="Taki K."/>
            <person name="Tammoja K."/>
            <person name="Tan S.L."/>
            <person name="Tang S."/>
            <person name="Taylor M.S."/>
            <person name="Tegner J."/>
            <person name="Teichmann S.A."/>
            <person name="Ueda H.R."/>
            <person name="van Nimwegen E."/>
            <person name="Verardo R."/>
            <person name="Wei C.L."/>
            <person name="Yagi K."/>
            <person name="Yamanishi H."/>
            <person name="Zabarovsky E."/>
            <person name="Zhu S."/>
            <person name="Zimmer A."/>
            <person name="Hide W."/>
            <person name="Bult C."/>
            <person name="Grimmond S.M."/>
            <person name="Teasdale R.D."/>
            <person name="Liu E.T."/>
            <person name="Brusic V."/>
            <person name="Quackenbush J."/>
            <person name="Wahlestedt C."/>
            <person name="Mattick J.S."/>
            <person name="Hume D.A."/>
            <person name="Kai C."/>
            <person name="Sasaki D."/>
            <person name="Tomaru Y."/>
            <person name="Fukuda S."/>
            <person name="Kanamori-Katayama M."/>
            <person name="Suzuki M."/>
            <person name="Aoki J."/>
            <person name="Arakawa T."/>
            <person name="Iida J."/>
            <person name="Imamura K."/>
            <person name="Itoh M."/>
            <person name="Kato T."/>
            <person name="Kawaji H."/>
            <person name="Kawagashira N."/>
            <person name="Kawashima T."/>
            <person name="Kojima M."/>
            <person name="Kondo S."/>
            <person name="Konno H."/>
            <person name="Nakano K."/>
            <person name="Ninomiya N."/>
            <person name="Nishio T."/>
            <person name="Okada M."/>
            <person name="Plessy C."/>
            <person name="Shibata K."/>
            <person name="Shiraki T."/>
            <person name="Suzuki S."/>
            <person name="Tagami M."/>
            <person name="Waki K."/>
            <person name="Watahiki A."/>
            <person name="Okamura-Oho Y."/>
            <person name="Suzuki H."/>
            <person name="Kawai J."/>
            <person name="Hayashizaki Y."/>
        </authorList>
    </citation>
    <scope>NUCLEOTIDE SEQUENCE [LARGE SCALE MRNA]</scope>
    <source>
        <strain>C57BL/6J</strain>
        <tissue>Pituitary</tissue>
        <tissue>Testis</tissue>
    </source>
</reference>
<reference key="2">
    <citation type="journal article" date="2004" name="Genome Res.">
        <title>The status, quality, and expansion of the NIH full-length cDNA project: the Mammalian Gene Collection (MGC).</title>
        <authorList>
            <consortium name="The MGC Project Team"/>
        </authorList>
    </citation>
    <scope>NUCLEOTIDE SEQUENCE [LARGE SCALE MRNA]</scope>
    <source>
        <strain>FVB/N-3</strain>
        <tissue>Brain</tissue>
        <tissue>Mammary tumor</tissue>
    </source>
</reference>
<sequence>MSTSVPQGHNWTRPVKKDDDEEDPLDQLITRSGCAASHFAVQECMAQHQDWRQCQPQVQAFRDCMSAQQARRREELQRRKEQASAQH</sequence>
<protein>
    <recommendedName>
        <fullName>Cytochrome c oxidase assembly factor 4 homolog, mitochondrial</fullName>
    </recommendedName>
    <alternativeName>
        <fullName>Coiled-coil-helix-coiled-coil-helix domain-containing protein 8</fullName>
    </alternativeName>
</protein>
<comment type="function">
    <text evidence="1">Putative COX assembly factor.</text>
</comment>
<comment type="subcellular location">
    <subcellularLocation>
        <location evidence="2">Mitochondrion</location>
    </subcellularLocation>
</comment>
<comment type="similarity">
    <text evidence="5">Belongs to the COA4 family.</text>
</comment>
<organism>
    <name type="scientific">Mus musculus</name>
    <name type="common">Mouse</name>
    <dbReference type="NCBI Taxonomy" id="10090"/>
    <lineage>
        <taxon>Eukaryota</taxon>
        <taxon>Metazoa</taxon>
        <taxon>Chordata</taxon>
        <taxon>Craniata</taxon>
        <taxon>Vertebrata</taxon>
        <taxon>Euteleostomi</taxon>
        <taxon>Mammalia</taxon>
        <taxon>Eutheria</taxon>
        <taxon>Euarchontoglires</taxon>
        <taxon>Glires</taxon>
        <taxon>Rodentia</taxon>
        <taxon>Myomorpha</taxon>
        <taxon>Muroidea</taxon>
        <taxon>Muridae</taxon>
        <taxon>Murinae</taxon>
        <taxon>Mus</taxon>
        <taxon>Mus</taxon>
    </lineage>
</organism>
<gene>
    <name type="primary">COA4</name>
    <name type="synonym">Chchd8</name>
</gene>
<name>COA4_MOUSE</name>
<feature type="chain" id="PRO_0000314909" description="Cytochrome c oxidase assembly factor 4 homolog, mitochondrial">
    <location>
        <begin position="1"/>
        <end position="87"/>
    </location>
</feature>
<feature type="domain" description="CHCH" evidence="3">
    <location>
        <begin position="31"/>
        <end position="72"/>
    </location>
</feature>
<feature type="region of interest" description="Disordered" evidence="4">
    <location>
        <begin position="1"/>
        <end position="24"/>
    </location>
</feature>
<feature type="region of interest" description="Disordered" evidence="4">
    <location>
        <begin position="68"/>
        <end position="87"/>
    </location>
</feature>
<feature type="short sequence motif" description="Cx9C motif 1" evidence="3">
    <location>
        <begin position="34"/>
        <end position="44"/>
    </location>
</feature>
<feature type="short sequence motif" description="Cx9C motif 2" evidence="3">
    <location>
        <begin position="54"/>
        <end position="64"/>
    </location>
</feature>
<feature type="compositionally biased region" description="Polar residues" evidence="4">
    <location>
        <begin position="1"/>
        <end position="10"/>
    </location>
</feature>
<feature type="compositionally biased region" description="Basic and acidic residues" evidence="4">
    <location>
        <begin position="71"/>
        <end position="87"/>
    </location>
</feature>
<feature type="disulfide bond" evidence="3">
    <location>
        <begin position="34"/>
        <end position="64"/>
    </location>
</feature>
<feature type="disulfide bond" evidence="3">
    <location>
        <begin position="44"/>
        <end position="54"/>
    </location>
</feature>
<feature type="sequence conflict" description="In Ref. 2; AAH96605." evidence="5" ref="2">
    <original>L</original>
    <variation>M</variation>
    <location>
        <position position="25"/>
    </location>
</feature>
<dbReference type="EMBL" id="AK019895">
    <property type="protein sequence ID" value="BAC25607.1"/>
    <property type="molecule type" value="mRNA"/>
</dbReference>
<dbReference type="EMBL" id="AK161506">
    <property type="protein sequence ID" value="BAE36430.1"/>
    <property type="molecule type" value="mRNA"/>
</dbReference>
<dbReference type="EMBL" id="BC096605">
    <property type="protein sequence ID" value="AAH96605.1"/>
    <property type="molecule type" value="mRNA"/>
</dbReference>
<dbReference type="EMBL" id="BC116995">
    <property type="protein sequence ID" value="AAI16996.1"/>
    <property type="molecule type" value="mRNA"/>
</dbReference>
<dbReference type="EMBL" id="BC116997">
    <property type="protein sequence ID" value="AAI16998.1"/>
    <property type="molecule type" value="mRNA"/>
</dbReference>
<dbReference type="CCDS" id="CCDS40037.1"/>
<dbReference type="RefSeq" id="NP_899093.1">
    <property type="nucleotide sequence ID" value="NM_183270.2"/>
</dbReference>
<dbReference type="RefSeq" id="XP_006508215.1">
    <property type="nucleotide sequence ID" value="XM_006508152.2"/>
</dbReference>
<dbReference type="SMR" id="Q8BT51"/>
<dbReference type="FunCoup" id="Q8BT51">
    <property type="interactions" value="530"/>
</dbReference>
<dbReference type="STRING" id="10090.ENSMUSP00000053727"/>
<dbReference type="GlyGen" id="Q8BT51">
    <property type="glycosylation" value="1 site, 1 N-linked glycan (1 site)"/>
</dbReference>
<dbReference type="PhosphoSitePlus" id="Q8BT51"/>
<dbReference type="PaxDb" id="10090-ENSMUSP00000053727"/>
<dbReference type="PeptideAtlas" id="Q8BT51"/>
<dbReference type="ProteomicsDB" id="283478"/>
<dbReference type="Antibodypedia" id="50305">
    <property type="antibodies" value="95 antibodies from 17 providers"/>
</dbReference>
<dbReference type="DNASU" id="68185"/>
<dbReference type="Ensembl" id="ENSMUST00000054310.4">
    <property type="protein sequence ID" value="ENSMUSP00000053727.4"/>
    <property type="gene ID" value="ENSMUSG00000044881.8"/>
</dbReference>
<dbReference type="Ensembl" id="ENSMUST00000120454.3">
    <property type="protein sequence ID" value="ENSMUSP00000114098.2"/>
    <property type="gene ID" value="ENSMUSG00000044881.8"/>
</dbReference>
<dbReference type="GeneID" id="68185"/>
<dbReference type="KEGG" id="mmu:68185"/>
<dbReference type="UCSC" id="uc009ine.1">
    <property type="organism name" value="mouse"/>
</dbReference>
<dbReference type="AGR" id="MGI:1915435"/>
<dbReference type="CTD" id="51287"/>
<dbReference type="MGI" id="MGI:1915435">
    <property type="gene designation" value="Coa4"/>
</dbReference>
<dbReference type="VEuPathDB" id="HostDB:ENSMUSG00000044881"/>
<dbReference type="eggNOG" id="KOG4138">
    <property type="taxonomic scope" value="Eukaryota"/>
</dbReference>
<dbReference type="GeneTree" id="ENSGT00390000008503"/>
<dbReference type="HOGENOM" id="CLU_169171_2_0_1"/>
<dbReference type="InParanoid" id="Q8BT51"/>
<dbReference type="OMA" id="MIARTGC"/>
<dbReference type="OrthoDB" id="5586401at2759"/>
<dbReference type="PhylomeDB" id="Q8BT51"/>
<dbReference type="TreeFam" id="TF328624"/>
<dbReference type="BioGRID-ORCS" id="68185">
    <property type="hits" value="11 hits in 79 CRISPR screens"/>
</dbReference>
<dbReference type="PRO" id="PR:Q8BT51"/>
<dbReference type="Proteomes" id="UP000000589">
    <property type="component" value="Chromosome 7"/>
</dbReference>
<dbReference type="RNAct" id="Q8BT51">
    <property type="molecule type" value="protein"/>
</dbReference>
<dbReference type="Bgee" id="ENSMUSG00000044881">
    <property type="expression patterns" value="Expressed in interventricular septum and 113 other cell types or tissues"/>
</dbReference>
<dbReference type="GO" id="GO:0005758">
    <property type="term" value="C:mitochondrial intermembrane space"/>
    <property type="evidence" value="ECO:0007669"/>
    <property type="project" value="InterPro"/>
</dbReference>
<dbReference type="GO" id="GO:0005739">
    <property type="term" value="C:mitochondrion"/>
    <property type="evidence" value="ECO:0000250"/>
    <property type="project" value="UniProtKB"/>
</dbReference>
<dbReference type="GO" id="GO:0033617">
    <property type="term" value="P:mitochondrial cytochrome c oxidase assembly"/>
    <property type="evidence" value="ECO:0007669"/>
    <property type="project" value="InterPro"/>
</dbReference>
<dbReference type="InterPro" id="IPR010625">
    <property type="entry name" value="CHCH"/>
</dbReference>
<dbReference type="InterPro" id="IPR039870">
    <property type="entry name" value="Coa4-like"/>
</dbReference>
<dbReference type="PANTHER" id="PTHR13639">
    <property type="entry name" value="CYTOCHROME C OXIDASE ASSEMBLY FACTOR 4 HOMOLOG, MITOCHONDRIAL"/>
    <property type="match status" value="1"/>
</dbReference>
<dbReference type="PANTHER" id="PTHR13639:SF2">
    <property type="entry name" value="CYTOCHROME C OXIDASE ASSEMBLY FACTOR 4 HOMOLOG, MITOCHONDRIAL"/>
    <property type="match status" value="1"/>
</dbReference>
<dbReference type="Pfam" id="PF06747">
    <property type="entry name" value="CHCH"/>
    <property type="match status" value="1"/>
</dbReference>
<dbReference type="PROSITE" id="PS51808">
    <property type="entry name" value="CHCH"/>
    <property type="match status" value="1"/>
</dbReference>
<proteinExistence type="inferred from homology"/>
<accession>Q8BT51</accession>
<accession>Q4VA04</accession>
<evidence type="ECO:0000250" key="1"/>
<evidence type="ECO:0000250" key="2">
    <source>
        <dbReference type="UniProtKB" id="Q9NYJ1"/>
    </source>
</evidence>
<evidence type="ECO:0000255" key="3">
    <source>
        <dbReference type="PROSITE-ProRule" id="PRU01150"/>
    </source>
</evidence>
<evidence type="ECO:0000256" key="4">
    <source>
        <dbReference type="SAM" id="MobiDB-lite"/>
    </source>
</evidence>
<evidence type="ECO:0000305" key="5"/>
<keyword id="KW-1015">Disulfide bond</keyword>
<keyword id="KW-0496">Mitochondrion</keyword>
<keyword id="KW-1185">Reference proteome</keyword>